<evidence type="ECO:0000255" key="1">
    <source>
        <dbReference type="HAMAP-Rule" id="MF_00918"/>
    </source>
</evidence>
<dbReference type="EMBL" id="AL591975">
    <property type="protein sequence ID" value="CAC98448.1"/>
    <property type="molecule type" value="Genomic_DNA"/>
</dbReference>
<dbReference type="PIR" id="AB1121">
    <property type="entry name" value="AB1121"/>
</dbReference>
<dbReference type="RefSeq" id="NP_463899.1">
    <property type="nucleotide sequence ID" value="NC_003210.1"/>
</dbReference>
<dbReference type="RefSeq" id="WP_003733006.1">
    <property type="nucleotide sequence ID" value="NZ_CP149495.1"/>
</dbReference>
<dbReference type="SMR" id="Q8Y9Z8"/>
<dbReference type="STRING" id="169963.gene:17593020"/>
<dbReference type="PaxDb" id="169963-lmo0369"/>
<dbReference type="EnsemblBacteria" id="CAC98448">
    <property type="protein sequence ID" value="CAC98448"/>
    <property type="gene ID" value="CAC98448"/>
</dbReference>
<dbReference type="GeneID" id="987619"/>
<dbReference type="KEGG" id="lmo:lmo0369"/>
<dbReference type="PATRIC" id="fig|169963.11.peg.381"/>
<dbReference type="eggNOG" id="COG0217">
    <property type="taxonomic scope" value="Bacteria"/>
</dbReference>
<dbReference type="HOGENOM" id="CLU_062974_2_0_9"/>
<dbReference type="OrthoDB" id="9781053at2"/>
<dbReference type="PhylomeDB" id="Q8Y9Z8"/>
<dbReference type="BioCyc" id="LMON169963:LMO0369-MONOMER"/>
<dbReference type="Proteomes" id="UP000000817">
    <property type="component" value="Chromosome"/>
</dbReference>
<dbReference type="GO" id="GO:0005829">
    <property type="term" value="C:cytosol"/>
    <property type="evidence" value="ECO:0000318"/>
    <property type="project" value="GO_Central"/>
</dbReference>
<dbReference type="GO" id="GO:0003677">
    <property type="term" value="F:DNA binding"/>
    <property type="evidence" value="ECO:0007669"/>
    <property type="project" value="UniProtKB-UniRule"/>
</dbReference>
<dbReference type="GO" id="GO:0006355">
    <property type="term" value="P:regulation of DNA-templated transcription"/>
    <property type="evidence" value="ECO:0007669"/>
    <property type="project" value="UniProtKB-UniRule"/>
</dbReference>
<dbReference type="FunFam" id="1.10.10.200:FF:000003">
    <property type="entry name" value="Probable transcriptional regulatory protein YeeN"/>
    <property type="match status" value="1"/>
</dbReference>
<dbReference type="FunFam" id="3.30.70.980:FF:000004">
    <property type="entry name" value="Probable transcriptional regulatory protein YeeN"/>
    <property type="match status" value="1"/>
</dbReference>
<dbReference type="Gene3D" id="1.10.10.200">
    <property type="match status" value="1"/>
</dbReference>
<dbReference type="Gene3D" id="3.30.70.980">
    <property type="match status" value="2"/>
</dbReference>
<dbReference type="HAMAP" id="MF_00693">
    <property type="entry name" value="Transcrip_reg_TACO1"/>
    <property type="match status" value="1"/>
</dbReference>
<dbReference type="HAMAP" id="MF_00918">
    <property type="entry name" value="Transcrip_reg_TACO1_YeeN"/>
    <property type="match status" value="1"/>
</dbReference>
<dbReference type="InterPro" id="IPR017856">
    <property type="entry name" value="Integrase-like_N"/>
</dbReference>
<dbReference type="InterPro" id="IPR048300">
    <property type="entry name" value="TACO1_YebC-like_2nd/3rd_dom"/>
</dbReference>
<dbReference type="InterPro" id="IPR049083">
    <property type="entry name" value="TACO1_YebC_N"/>
</dbReference>
<dbReference type="InterPro" id="IPR002876">
    <property type="entry name" value="Transcrip_reg_TACO1-like"/>
</dbReference>
<dbReference type="InterPro" id="IPR026564">
    <property type="entry name" value="Transcrip_reg_TACO1-like_dom3"/>
</dbReference>
<dbReference type="InterPro" id="IPR026562">
    <property type="entry name" value="Transcrip_reg_TACO1_YeeN"/>
</dbReference>
<dbReference type="InterPro" id="IPR029072">
    <property type="entry name" value="YebC-like"/>
</dbReference>
<dbReference type="NCBIfam" id="NF001030">
    <property type="entry name" value="PRK00110.1"/>
    <property type="match status" value="1"/>
</dbReference>
<dbReference type="NCBIfam" id="NF009044">
    <property type="entry name" value="PRK12378.1"/>
    <property type="match status" value="1"/>
</dbReference>
<dbReference type="NCBIfam" id="TIGR01033">
    <property type="entry name" value="YebC/PmpR family DNA-binding transcriptional regulator"/>
    <property type="match status" value="1"/>
</dbReference>
<dbReference type="PANTHER" id="PTHR12532">
    <property type="entry name" value="TRANSLATIONAL ACTIVATOR OF CYTOCHROME C OXIDASE 1"/>
    <property type="match status" value="1"/>
</dbReference>
<dbReference type="PANTHER" id="PTHR12532:SF0">
    <property type="entry name" value="TRANSLATIONAL ACTIVATOR OF CYTOCHROME C OXIDASE 1"/>
    <property type="match status" value="1"/>
</dbReference>
<dbReference type="Pfam" id="PF20772">
    <property type="entry name" value="TACO1_YebC_N"/>
    <property type="match status" value="1"/>
</dbReference>
<dbReference type="Pfam" id="PF01709">
    <property type="entry name" value="Transcrip_reg"/>
    <property type="match status" value="1"/>
</dbReference>
<dbReference type="SUPFAM" id="SSF75625">
    <property type="entry name" value="YebC-like"/>
    <property type="match status" value="1"/>
</dbReference>
<accession>Q8Y9Z8</accession>
<proteinExistence type="inferred from homology"/>
<keyword id="KW-0963">Cytoplasm</keyword>
<keyword id="KW-0238">DNA-binding</keyword>
<keyword id="KW-1185">Reference proteome</keyword>
<keyword id="KW-0804">Transcription</keyword>
<keyword id="KW-0805">Transcription regulation</keyword>
<comment type="subcellular location">
    <subcellularLocation>
        <location evidence="1">Cytoplasm</location>
    </subcellularLocation>
</comment>
<comment type="similarity">
    <text evidence="1">Belongs to the TACO1 family. YeeN subfamily.</text>
</comment>
<sequence>MGRKWANIKEKKASKDKTNSRIYAKFGIEIYVAAKSGDPDPHSNQKLRFVIERAKTYNVPKHIIDRAIEKAKGTGDETYSELRYEGFGPNGSMIIVDALTNNVNRTASDVRAAYSKNGGNMGVSGSVAYMFDNTAIFGVEGKDADELLELLMEADIDVRDILDEDGQAIIYAEPEDFHKVQEGLKAAGIEEFTVAEIEMIPQNDIQLSGEDLEKFERLIDALEDLEDVQKVYHNVELED</sequence>
<reference key="1">
    <citation type="journal article" date="2001" name="Science">
        <title>Comparative genomics of Listeria species.</title>
        <authorList>
            <person name="Glaser P."/>
            <person name="Frangeul L."/>
            <person name="Buchrieser C."/>
            <person name="Rusniok C."/>
            <person name="Amend A."/>
            <person name="Baquero F."/>
            <person name="Berche P."/>
            <person name="Bloecker H."/>
            <person name="Brandt P."/>
            <person name="Chakraborty T."/>
            <person name="Charbit A."/>
            <person name="Chetouani F."/>
            <person name="Couve E."/>
            <person name="de Daruvar A."/>
            <person name="Dehoux P."/>
            <person name="Domann E."/>
            <person name="Dominguez-Bernal G."/>
            <person name="Duchaud E."/>
            <person name="Durant L."/>
            <person name="Dussurget O."/>
            <person name="Entian K.-D."/>
            <person name="Fsihi H."/>
            <person name="Garcia-del Portillo F."/>
            <person name="Garrido P."/>
            <person name="Gautier L."/>
            <person name="Goebel W."/>
            <person name="Gomez-Lopez N."/>
            <person name="Hain T."/>
            <person name="Hauf J."/>
            <person name="Jackson D."/>
            <person name="Jones L.-M."/>
            <person name="Kaerst U."/>
            <person name="Kreft J."/>
            <person name="Kuhn M."/>
            <person name="Kunst F."/>
            <person name="Kurapkat G."/>
            <person name="Madueno E."/>
            <person name="Maitournam A."/>
            <person name="Mata Vicente J."/>
            <person name="Ng E."/>
            <person name="Nedjari H."/>
            <person name="Nordsiek G."/>
            <person name="Novella S."/>
            <person name="de Pablos B."/>
            <person name="Perez-Diaz J.-C."/>
            <person name="Purcell R."/>
            <person name="Remmel B."/>
            <person name="Rose M."/>
            <person name="Schlueter T."/>
            <person name="Simoes N."/>
            <person name="Tierrez A."/>
            <person name="Vazquez-Boland J.-A."/>
            <person name="Voss H."/>
            <person name="Wehland J."/>
            <person name="Cossart P."/>
        </authorList>
    </citation>
    <scope>NUCLEOTIDE SEQUENCE [LARGE SCALE GENOMIC DNA]</scope>
    <source>
        <strain>ATCC BAA-679 / EGD-e</strain>
    </source>
</reference>
<gene>
    <name type="ordered locus">lmo0369</name>
</gene>
<feature type="chain" id="PRO_0000175838" description="Probable transcriptional regulatory protein lmo0369">
    <location>
        <begin position="1"/>
        <end position="239"/>
    </location>
</feature>
<organism>
    <name type="scientific">Listeria monocytogenes serovar 1/2a (strain ATCC BAA-679 / EGD-e)</name>
    <dbReference type="NCBI Taxonomy" id="169963"/>
    <lineage>
        <taxon>Bacteria</taxon>
        <taxon>Bacillati</taxon>
        <taxon>Bacillota</taxon>
        <taxon>Bacilli</taxon>
        <taxon>Bacillales</taxon>
        <taxon>Listeriaceae</taxon>
        <taxon>Listeria</taxon>
    </lineage>
</organism>
<name>Y369_LISMO</name>
<protein>
    <recommendedName>
        <fullName evidence="1">Probable transcriptional regulatory protein lmo0369</fullName>
    </recommendedName>
</protein>